<reference key="1">
    <citation type="journal article" date="1999" name="Genetics">
        <title>Divergence of the hyperthermophilic archaea Pyrococcus furiosus and P. horikoshii inferred from complete genomic sequences.</title>
        <authorList>
            <person name="Maeder D.L."/>
            <person name="Weiss R.B."/>
            <person name="Dunn D.M."/>
            <person name="Cherry J.L."/>
            <person name="Gonzalez J.M."/>
            <person name="DiRuggiero J."/>
            <person name="Robb F.T."/>
        </authorList>
    </citation>
    <scope>NUCLEOTIDE SEQUENCE [LARGE SCALE GENOMIC DNA]</scope>
    <source>
        <strain>ATCC 43587 / DSM 3638 / JCM 8422 / Vc1</strain>
    </source>
</reference>
<protein>
    <recommendedName>
        <fullName evidence="1">Digeranylgeranylglyceryl phosphate synthase</fullName>
        <shortName evidence="1">DGGGP synthase</shortName>
        <shortName evidence="1">DGGGPS</shortName>
        <ecNumber evidence="1">2.5.1.42</ecNumber>
    </recommendedName>
    <alternativeName>
        <fullName evidence="1">(S)-2,3-di-O-geranylgeranylglyceryl phosphate synthase</fullName>
    </alternativeName>
    <alternativeName>
        <fullName evidence="1">Geranylgeranylglycerol-phosphate geranylgeranyltransferase</fullName>
    </alternativeName>
</protein>
<feature type="chain" id="PRO_0000350716" description="Digeranylgeranylglyceryl phosphate synthase">
    <location>
        <begin position="1"/>
        <end position="277"/>
    </location>
</feature>
<feature type="transmembrane region" description="Helical" evidence="1">
    <location>
        <begin position="16"/>
        <end position="36"/>
    </location>
</feature>
<feature type="transmembrane region" description="Helical" evidence="1">
    <location>
        <begin position="84"/>
        <end position="104"/>
    </location>
</feature>
<feature type="transmembrane region" description="Helical" evidence="1">
    <location>
        <begin position="107"/>
        <end position="127"/>
    </location>
</feature>
<feature type="transmembrane region" description="Helical" evidence="1">
    <location>
        <begin position="146"/>
        <end position="166"/>
    </location>
</feature>
<feature type="transmembrane region" description="Helical" evidence="1">
    <location>
        <begin position="200"/>
        <end position="220"/>
    </location>
</feature>
<feature type="transmembrane region" description="Helical" evidence="1">
    <location>
        <begin position="221"/>
        <end position="241"/>
    </location>
</feature>
<feature type="transmembrane region" description="Helical" evidence="1">
    <location>
        <begin position="257"/>
        <end position="277"/>
    </location>
</feature>
<keyword id="KW-1003">Cell membrane</keyword>
<keyword id="KW-0444">Lipid biosynthesis</keyword>
<keyword id="KW-0443">Lipid metabolism</keyword>
<keyword id="KW-0460">Magnesium</keyword>
<keyword id="KW-0472">Membrane</keyword>
<keyword id="KW-0594">Phospholipid biosynthesis</keyword>
<keyword id="KW-1208">Phospholipid metabolism</keyword>
<keyword id="KW-1185">Reference proteome</keyword>
<keyword id="KW-0808">Transferase</keyword>
<keyword id="KW-0812">Transmembrane</keyword>
<keyword id="KW-1133">Transmembrane helix</keyword>
<name>DGGGP_PYRFU</name>
<proteinExistence type="inferred from homology"/>
<gene>
    <name type="ordered locus">PF1963</name>
</gene>
<dbReference type="EC" id="2.5.1.42" evidence="1"/>
<dbReference type="EMBL" id="AE009950">
    <property type="protein sequence ID" value="AAL82087.1"/>
    <property type="molecule type" value="Genomic_DNA"/>
</dbReference>
<dbReference type="RefSeq" id="WP_011013105.1">
    <property type="nucleotide sequence ID" value="NZ_CP023154.1"/>
</dbReference>
<dbReference type="SMR" id="Q8TZM7"/>
<dbReference type="STRING" id="186497.PF1963"/>
<dbReference type="PaxDb" id="186497-PF1963"/>
<dbReference type="KEGG" id="pfu:PF1963"/>
<dbReference type="PATRIC" id="fig|186497.12.peg.2036"/>
<dbReference type="eggNOG" id="arCOG00476">
    <property type="taxonomic scope" value="Archaea"/>
</dbReference>
<dbReference type="HOGENOM" id="CLU_073311_1_1_2"/>
<dbReference type="OrthoDB" id="11851at2157"/>
<dbReference type="PhylomeDB" id="Q8TZM7"/>
<dbReference type="UniPathway" id="UPA00940"/>
<dbReference type="Proteomes" id="UP000001013">
    <property type="component" value="Chromosome"/>
</dbReference>
<dbReference type="GO" id="GO:0005886">
    <property type="term" value="C:plasma membrane"/>
    <property type="evidence" value="ECO:0007669"/>
    <property type="project" value="UniProtKB-SubCell"/>
</dbReference>
<dbReference type="GO" id="GO:0047295">
    <property type="term" value="F:geranylgeranylglycerol-phosphate geranylgeranyltransferase activity"/>
    <property type="evidence" value="ECO:0007669"/>
    <property type="project" value="UniProtKB-UniRule"/>
</dbReference>
<dbReference type="GO" id="GO:0000287">
    <property type="term" value="F:magnesium ion binding"/>
    <property type="evidence" value="ECO:0007669"/>
    <property type="project" value="UniProtKB-UniRule"/>
</dbReference>
<dbReference type="GO" id="GO:0046474">
    <property type="term" value="P:glycerophospholipid biosynthetic process"/>
    <property type="evidence" value="ECO:0007669"/>
    <property type="project" value="UniProtKB-UniRule"/>
</dbReference>
<dbReference type="CDD" id="cd13961">
    <property type="entry name" value="PT_UbiA_DGGGPS"/>
    <property type="match status" value="1"/>
</dbReference>
<dbReference type="Gene3D" id="1.10.357.140">
    <property type="entry name" value="UbiA prenyltransferase"/>
    <property type="match status" value="1"/>
</dbReference>
<dbReference type="Gene3D" id="1.20.120.1780">
    <property type="entry name" value="UbiA prenyltransferase"/>
    <property type="match status" value="1"/>
</dbReference>
<dbReference type="HAMAP" id="MF_01286">
    <property type="entry name" value="DGGGP_synth"/>
    <property type="match status" value="1"/>
</dbReference>
<dbReference type="InterPro" id="IPR023547">
    <property type="entry name" value="DGGGP_synth"/>
</dbReference>
<dbReference type="InterPro" id="IPR050475">
    <property type="entry name" value="Prenyltransferase_related"/>
</dbReference>
<dbReference type="InterPro" id="IPR000537">
    <property type="entry name" value="UbiA_prenyltransferase"/>
</dbReference>
<dbReference type="InterPro" id="IPR044878">
    <property type="entry name" value="UbiA_sf"/>
</dbReference>
<dbReference type="NCBIfam" id="NF009522">
    <property type="entry name" value="PRK12883.1"/>
    <property type="match status" value="1"/>
</dbReference>
<dbReference type="PANTHER" id="PTHR42723">
    <property type="entry name" value="CHLOROPHYLL SYNTHASE"/>
    <property type="match status" value="1"/>
</dbReference>
<dbReference type="PANTHER" id="PTHR42723:SF1">
    <property type="entry name" value="CHLOROPHYLL SYNTHASE, CHLOROPLASTIC"/>
    <property type="match status" value="1"/>
</dbReference>
<dbReference type="Pfam" id="PF01040">
    <property type="entry name" value="UbiA"/>
    <property type="match status" value="1"/>
</dbReference>
<accession>Q8TZM7</accession>
<sequence length="277" mass="29792">MEVKGFIEIMRPHNCILAGIVGILGALVAYEGIPDIKTLTLIFWVVYFGCSGGNTANDYFDYEIDKINRPNRPLPRGAMSRRAALYYALLQYAIGSILAYFLNIRAFVFATIAYFLTFLYGWKLKPLPLVGNITVAALTAATPIYGAIGVGRIGLAGYLAICAFLVNVSREIMKDIEDIEGDKALGARTLPIIIGEKKAAIIAAIFGFLTVIASFLPVKVGIGLGYAPIIIVDIIIIKASIDVLRDPKAASKGQKLLKIATFVAVISFLAGALTKGV</sequence>
<evidence type="ECO:0000255" key="1">
    <source>
        <dbReference type="HAMAP-Rule" id="MF_01286"/>
    </source>
</evidence>
<comment type="function">
    <text evidence="1">Prenyltransferase that catalyzes the transfer of the geranylgeranyl moiety of geranylgeranyl diphosphate (GGPP) to the C2 hydroxyl of (S)-3-O-geranylgeranylglyceryl phosphate (GGGP). This reaction is the second ether-bond-formation step in the biosynthesis of archaeal membrane lipids.</text>
</comment>
<comment type="catalytic activity">
    <reaction evidence="1">
        <text>sn-3-O-(geranylgeranyl)glycerol 1-phosphate + (2E,6E,10E)-geranylgeranyl diphosphate = 2,3-bis-O-(geranylgeranyl)-sn-glycerol 1-phosphate + diphosphate</text>
        <dbReference type="Rhea" id="RHEA:18109"/>
        <dbReference type="ChEBI" id="CHEBI:33019"/>
        <dbReference type="ChEBI" id="CHEBI:57677"/>
        <dbReference type="ChEBI" id="CHEBI:58756"/>
        <dbReference type="ChEBI" id="CHEBI:58837"/>
        <dbReference type="EC" id="2.5.1.42"/>
    </reaction>
</comment>
<comment type="cofactor">
    <cofactor evidence="1">
        <name>Mg(2+)</name>
        <dbReference type="ChEBI" id="CHEBI:18420"/>
    </cofactor>
</comment>
<comment type="pathway">
    <text evidence="1">Membrane lipid metabolism; glycerophospholipid metabolism.</text>
</comment>
<comment type="subcellular location">
    <subcellularLocation>
        <location evidence="1">Cell membrane</location>
        <topology evidence="1">Multi-pass membrane protein</topology>
    </subcellularLocation>
</comment>
<comment type="similarity">
    <text evidence="1">Belongs to the UbiA prenyltransferase family. DGGGP synthase subfamily.</text>
</comment>
<organism>
    <name type="scientific">Pyrococcus furiosus (strain ATCC 43587 / DSM 3638 / JCM 8422 / Vc1)</name>
    <dbReference type="NCBI Taxonomy" id="186497"/>
    <lineage>
        <taxon>Archaea</taxon>
        <taxon>Methanobacteriati</taxon>
        <taxon>Methanobacteriota</taxon>
        <taxon>Thermococci</taxon>
        <taxon>Thermococcales</taxon>
        <taxon>Thermococcaceae</taxon>
        <taxon>Pyrococcus</taxon>
    </lineage>
</organism>